<gene>
    <name evidence="1" type="primary">gpr</name>
    <name type="ordered locus">CPE2041</name>
</gene>
<sequence length="325" mass="35634">MYNVRTDLAVESREIYKHRYNREIDGVVFEEKTVEEDIKVTNVDILNEEGAKAMEKPIGRYVTIDIPEYTHYDGGIMDEVSHVVAASLEELINLPEERTALVVGLGNWNVTPDAIGPKVVGKLMVTRHLKKVMPDIIDDSVRPVCAIAPGVLGITGIETGEIIKSLVEKIKPDLVVCIDALASRKLERVARTIQISNTGISPGAGVGNHRMQINEESLGIPVIALGVPTVVDAATIANDAMDLVLDEMINQADAGKEFYNILNNIDKNEKGMMIKSLLDPYVGDLMVTPKEIDDIIESVSKIIANGINIALQPNMVLEDINKFLN</sequence>
<comment type="function">
    <text evidence="1">Initiates the rapid degradation of small, acid-soluble proteins during spore germination.</text>
</comment>
<comment type="catalytic activity">
    <reaction evidence="1">
        <text>Endopeptidase action with P4 Glu or Asp, P1 preferably Glu &gt; Asp, P1' hydrophobic and P2' Ala.</text>
        <dbReference type="EC" id="3.4.24.78"/>
    </reaction>
</comment>
<comment type="subunit">
    <text evidence="1">Homotetramer.</text>
</comment>
<comment type="PTM">
    <text evidence="1">Autoproteolytically processed. The inactive tetrameric zymogen termed p46 autoprocesses to a smaller form termed p41, which is active only during spore germination.</text>
</comment>
<comment type="similarity">
    <text evidence="1">Belongs to the peptidase A25 family.</text>
</comment>
<reference key="1">
    <citation type="journal article" date="2002" name="Proc. Natl. Acad. Sci. U.S.A.">
        <title>Complete genome sequence of Clostridium perfringens, an anaerobic flesh-eater.</title>
        <authorList>
            <person name="Shimizu T."/>
            <person name="Ohtani K."/>
            <person name="Hirakawa H."/>
            <person name="Ohshima K."/>
            <person name="Yamashita A."/>
            <person name="Shiba T."/>
            <person name="Ogasawara N."/>
            <person name="Hattori M."/>
            <person name="Kuhara S."/>
            <person name="Hayashi H."/>
        </authorList>
    </citation>
    <scope>NUCLEOTIDE SEQUENCE [LARGE SCALE GENOMIC DNA]</scope>
    <source>
        <strain>13 / Type A</strain>
    </source>
</reference>
<organism>
    <name type="scientific">Clostridium perfringens (strain 13 / Type A)</name>
    <dbReference type="NCBI Taxonomy" id="195102"/>
    <lineage>
        <taxon>Bacteria</taxon>
        <taxon>Bacillati</taxon>
        <taxon>Bacillota</taxon>
        <taxon>Clostridia</taxon>
        <taxon>Eubacteriales</taxon>
        <taxon>Clostridiaceae</taxon>
        <taxon>Clostridium</taxon>
    </lineage>
</organism>
<feature type="propeptide" id="PRO_0000026874" evidence="1">
    <location>
        <begin position="1"/>
        <end position="7"/>
    </location>
</feature>
<feature type="chain" id="PRO_0000026875" description="Germination protease">
    <location>
        <begin position="8"/>
        <end position="325"/>
    </location>
</feature>
<name>GPR_CLOPE</name>
<proteinExistence type="inferred from homology"/>
<protein>
    <recommendedName>
        <fullName evidence="1">Germination protease</fullName>
        <ecNumber evidence="1">3.4.24.78</ecNumber>
    </recommendedName>
    <alternativeName>
        <fullName evidence="1">GPR endopeptidase</fullName>
    </alternativeName>
    <alternativeName>
        <fullName evidence="1">Germination proteinase</fullName>
    </alternativeName>
    <alternativeName>
        <fullName evidence="1">Spore protease</fullName>
    </alternativeName>
</protein>
<keyword id="KW-0378">Hydrolase</keyword>
<keyword id="KW-0645">Protease</keyword>
<keyword id="KW-1185">Reference proteome</keyword>
<keyword id="KW-0865">Zymogen</keyword>
<evidence type="ECO:0000255" key="1">
    <source>
        <dbReference type="HAMAP-Rule" id="MF_00626"/>
    </source>
</evidence>
<dbReference type="EC" id="3.4.24.78" evidence="1"/>
<dbReference type="EMBL" id="BA000016">
    <property type="protein sequence ID" value="BAB81747.1"/>
    <property type="molecule type" value="Genomic_DNA"/>
</dbReference>
<dbReference type="RefSeq" id="WP_011010731.1">
    <property type="nucleotide sequence ID" value="NC_003366.1"/>
</dbReference>
<dbReference type="SMR" id="Q8XIS3"/>
<dbReference type="STRING" id="195102.gene:10491311"/>
<dbReference type="MEROPS" id="A25.001"/>
<dbReference type="KEGG" id="cpe:CPE2041"/>
<dbReference type="HOGENOM" id="CLU_055087_1_0_9"/>
<dbReference type="Proteomes" id="UP000000818">
    <property type="component" value="Chromosome"/>
</dbReference>
<dbReference type="GO" id="GO:0004222">
    <property type="term" value="F:metalloendopeptidase activity"/>
    <property type="evidence" value="ECO:0007669"/>
    <property type="project" value="UniProtKB-UniRule"/>
</dbReference>
<dbReference type="GO" id="GO:0006508">
    <property type="term" value="P:proteolysis"/>
    <property type="evidence" value="ECO:0007669"/>
    <property type="project" value="UniProtKB-UniRule"/>
</dbReference>
<dbReference type="GO" id="GO:0009847">
    <property type="term" value="P:spore germination"/>
    <property type="evidence" value="ECO:0007669"/>
    <property type="project" value="UniProtKB-UniRule"/>
</dbReference>
<dbReference type="Gene3D" id="3.40.50.1450">
    <property type="entry name" value="HybD-like"/>
    <property type="match status" value="1"/>
</dbReference>
<dbReference type="HAMAP" id="MF_00626">
    <property type="entry name" value="Germination_prot"/>
    <property type="match status" value="1"/>
</dbReference>
<dbReference type="InterPro" id="IPR023430">
    <property type="entry name" value="Pept_HybD-like_dom_sf"/>
</dbReference>
<dbReference type="InterPro" id="IPR005080">
    <property type="entry name" value="Peptidase_A25"/>
</dbReference>
<dbReference type="NCBIfam" id="TIGR01441">
    <property type="entry name" value="GPR"/>
    <property type="match status" value="1"/>
</dbReference>
<dbReference type="Pfam" id="PF03418">
    <property type="entry name" value="Peptidase_A25"/>
    <property type="match status" value="2"/>
</dbReference>
<dbReference type="PIRSF" id="PIRSF019549">
    <property type="entry name" value="Peptidase_A25"/>
    <property type="match status" value="1"/>
</dbReference>
<dbReference type="SUPFAM" id="SSF53163">
    <property type="entry name" value="HybD-like"/>
    <property type="match status" value="1"/>
</dbReference>
<accession>Q8XIS3</accession>